<proteinExistence type="predicted"/>
<organism>
    <name type="scientific">Enterococcus faecalis (strain ATCC 700802 / V583)</name>
    <dbReference type="NCBI Taxonomy" id="226185"/>
    <lineage>
        <taxon>Bacteria</taxon>
        <taxon>Bacillati</taxon>
        <taxon>Bacillota</taxon>
        <taxon>Bacilli</taxon>
        <taxon>Lactobacillales</taxon>
        <taxon>Enterococcaceae</taxon>
        <taxon>Enterococcus</taxon>
    </lineage>
</organism>
<accession>P18007</accession>
<reference key="1">
    <citation type="journal article" date="1990" name="Mol. Microbiol.">
        <title>Sequence analysis of Enterococcus faecalis aggregation substance encoded by the sex pheromone plasmid pAD1.</title>
        <authorList>
            <person name="Galli D."/>
            <person name="Lottspeich F."/>
            <person name="Wirth R."/>
        </authorList>
    </citation>
    <scope>NUCLEOTIDE SEQUENCE [GENOMIC DNA]</scope>
    <source>
        <strain>DS16</strain>
        <plasmid>pAD1</plasmid>
    </source>
</reference>
<reference key="2">
    <citation type="journal article" date="2003" name="Science">
        <title>Role of mobile DNA in the evolution of vancomycin-resistant Enterococcus faecalis.</title>
        <authorList>
            <person name="Paulsen I.T."/>
            <person name="Banerjei L."/>
            <person name="Myers G.S.A."/>
            <person name="Nelson K.E."/>
            <person name="Seshadri R."/>
            <person name="Read T.D."/>
            <person name="Fouts D.E."/>
            <person name="Eisen J.A."/>
            <person name="Gill S.R."/>
            <person name="Heidelberg J.F."/>
            <person name="Tettelin H."/>
            <person name="Dodson R.J."/>
            <person name="Umayam L.A."/>
            <person name="Brinkac L.M."/>
            <person name="Beanan M.J."/>
            <person name="Daugherty S.C."/>
            <person name="DeBoy R.T."/>
            <person name="Durkin S.A."/>
            <person name="Kolonay J.F."/>
            <person name="Madupu R."/>
            <person name="Nelson W.C."/>
            <person name="Vamathevan J.J."/>
            <person name="Tran B."/>
            <person name="Upton J."/>
            <person name="Hansen T."/>
            <person name="Shetty J."/>
            <person name="Khouri H.M."/>
            <person name="Utterback T.R."/>
            <person name="Radune D."/>
            <person name="Ketchum K.A."/>
            <person name="Dougherty B.A."/>
            <person name="Fraser C.M."/>
        </authorList>
    </citation>
    <scope>NUCLEOTIDE SEQUENCE [LARGE SCALE GENOMIC DNA]</scope>
    <source>
        <strain>ATCC 700802 / V583</strain>
        <plasmid>pTEF1</plasmid>
    </source>
</reference>
<name>Y4048_ENTFA</name>
<sequence length="111" mass="13160">MKNYDPNIRWGLHTIKVSFQRGVYKGFVTFVKSGNCKGLDVLGIDEEDLYDMKFKENPINFRLLGEDDNGDEWFAMTLKNDKKDELLVEDVWEELSEYIVRIEIIDFEEEK</sequence>
<geneLocation type="plasmid">
    <name>pTEF1</name>
</geneLocation>
<geneLocation type="plasmid">
    <name>pAD1</name>
</geneLocation>
<gene>
    <name type="ordered locus">EF_A0048</name>
</gene>
<keyword id="KW-0614">Plasmid</keyword>
<keyword id="KW-1185">Reference proteome</keyword>
<dbReference type="EMBL" id="X17214">
    <property type="protein sequence ID" value="CAA35082.1"/>
    <property type="molecule type" value="Genomic_DNA"/>
</dbReference>
<dbReference type="EMBL" id="AE016833">
    <property type="protein sequence ID" value="AAO83044.1"/>
    <property type="molecule type" value="Genomic_DNA"/>
</dbReference>
<dbReference type="PIR" id="S10222">
    <property type="entry name" value="S10222"/>
</dbReference>
<dbReference type="RefSeq" id="NP_816973.1">
    <property type="nucleotide sequence ID" value="NC_004669.1"/>
</dbReference>
<dbReference type="RefSeq" id="WP_002360910.1">
    <property type="nucleotide sequence ID" value="NZ_KE136530.1"/>
</dbReference>
<dbReference type="RefSeq" id="YP_002333467.1">
    <property type="nucleotide sequence ID" value="NC_011642.1"/>
</dbReference>
<dbReference type="RefSeq" id="YP_004032955.1">
    <property type="nucleotide sequence ID" value="NC_014726.1"/>
</dbReference>
<dbReference type="EnsemblBacteria" id="AAO83044">
    <property type="protein sequence ID" value="AAO83044"/>
    <property type="gene ID" value="EF_A0048"/>
</dbReference>
<dbReference type="KEGG" id="efa:EFA0048"/>
<dbReference type="PATRIC" id="fig|226185.45.peg.3341"/>
<dbReference type="HOGENOM" id="CLU_175410_0_0_9"/>
<dbReference type="PRO" id="PR:P18007"/>
<dbReference type="Proteomes" id="UP000001415">
    <property type="component" value="Plasmid pTEF1"/>
</dbReference>
<dbReference type="InterPro" id="IPR035387">
    <property type="entry name" value="DUF5406"/>
</dbReference>
<dbReference type="Pfam" id="PF17400">
    <property type="entry name" value="DUF5406"/>
    <property type="match status" value="1"/>
</dbReference>
<protein>
    <recommendedName>
        <fullName>Uncharacterized protein EF_A0048</fullName>
    </recommendedName>
    <alternativeName>
        <fullName>ORF 1</fullName>
    </alternativeName>
</protein>
<feature type="chain" id="PRO_0000068502" description="Uncharacterized protein EF_A0048">
    <location>
        <begin position="1"/>
        <end position="111"/>
    </location>
</feature>